<organism>
    <name type="scientific">Xanthomonas euvesicatoria pv. vesicatoria (strain 85-10)</name>
    <name type="common">Xanthomonas campestris pv. vesicatoria</name>
    <dbReference type="NCBI Taxonomy" id="316273"/>
    <lineage>
        <taxon>Bacteria</taxon>
        <taxon>Pseudomonadati</taxon>
        <taxon>Pseudomonadota</taxon>
        <taxon>Gammaproteobacteria</taxon>
        <taxon>Lysobacterales</taxon>
        <taxon>Lysobacteraceae</taxon>
        <taxon>Xanthomonas</taxon>
    </lineage>
</organism>
<name>HEM6_XANE5</name>
<evidence type="ECO:0000255" key="1">
    <source>
        <dbReference type="HAMAP-Rule" id="MF_00333"/>
    </source>
</evidence>
<keyword id="KW-0963">Cytoplasm</keyword>
<keyword id="KW-0350">Heme biosynthesis</keyword>
<keyword id="KW-0479">Metal-binding</keyword>
<keyword id="KW-0560">Oxidoreductase</keyword>
<keyword id="KW-0627">Porphyrin biosynthesis</keyword>
<accession>Q3BMT4</accession>
<sequence length="299" mass="34412">MNEFDRVRDYLTDLQDRICAAVEAADGKARFAEDLWKREEGGGGRTRILRDGAVFEQAGIGFSDVSGTRLPPSASAHRPELAGATWRACGVSLVFHPHNPYIPTTHMNVRYFRAERDGEVVAAWFGGGFDLTPFYPFDEDVQHWHRVAQALCEPFGQERYAAHKRWCDEYFFLRHRNETRGVGGLFFDDLGQDFERDFAYQRAVGDGFLDAYIPIVQRRKDTPYGEREREFQLYRRGRYVEFNLVYDRGTLFGLQSGGRAESILMSLPPRVRWEYGFTPEPGSAEARLADYLIPRDWLG</sequence>
<reference key="1">
    <citation type="journal article" date="2005" name="J. Bacteriol.">
        <title>Insights into genome plasticity and pathogenicity of the plant pathogenic Bacterium Xanthomonas campestris pv. vesicatoria revealed by the complete genome sequence.</title>
        <authorList>
            <person name="Thieme F."/>
            <person name="Koebnik R."/>
            <person name="Bekel T."/>
            <person name="Berger C."/>
            <person name="Boch J."/>
            <person name="Buettner D."/>
            <person name="Caldana C."/>
            <person name="Gaigalat L."/>
            <person name="Goesmann A."/>
            <person name="Kay S."/>
            <person name="Kirchner O."/>
            <person name="Lanz C."/>
            <person name="Linke B."/>
            <person name="McHardy A.C."/>
            <person name="Meyer F."/>
            <person name="Mittenhuber G."/>
            <person name="Nies D.H."/>
            <person name="Niesbach-Kloesgen U."/>
            <person name="Patschkowski T."/>
            <person name="Rueckert C."/>
            <person name="Rupp O."/>
            <person name="Schneiker S."/>
            <person name="Schuster S.C."/>
            <person name="Vorhoelter F.J."/>
            <person name="Weber E."/>
            <person name="Puehler A."/>
            <person name="Bonas U."/>
            <person name="Bartels D."/>
            <person name="Kaiser O."/>
        </authorList>
    </citation>
    <scope>NUCLEOTIDE SEQUENCE [LARGE SCALE GENOMIC DNA]</scope>
    <source>
        <strain>85-10</strain>
    </source>
</reference>
<proteinExistence type="inferred from homology"/>
<comment type="function">
    <text evidence="1">Involved in the heme biosynthesis. Catalyzes the aerobic oxidative decarboxylation of propionate groups of rings A and B of coproporphyrinogen-III to yield the vinyl groups in protoporphyrinogen-IX.</text>
</comment>
<comment type="catalytic activity">
    <reaction evidence="1">
        <text>coproporphyrinogen III + O2 + 2 H(+) = protoporphyrinogen IX + 2 CO2 + 2 H2O</text>
        <dbReference type="Rhea" id="RHEA:18257"/>
        <dbReference type="ChEBI" id="CHEBI:15377"/>
        <dbReference type="ChEBI" id="CHEBI:15378"/>
        <dbReference type="ChEBI" id="CHEBI:15379"/>
        <dbReference type="ChEBI" id="CHEBI:16526"/>
        <dbReference type="ChEBI" id="CHEBI:57307"/>
        <dbReference type="ChEBI" id="CHEBI:57309"/>
        <dbReference type="EC" id="1.3.3.3"/>
    </reaction>
</comment>
<comment type="cofactor">
    <cofactor evidence="1">
        <name>a divalent metal cation</name>
        <dbReference type="ChEBI" id="CHEBI:60240"/>
    </cofactor>
</comment>
<comment type="pathway">
    <text evidence="1">Porphyrin-containing compound metabolism; protoporphyrin-IX biosynthesis; protoporphyrinogen-IX from coproporphyrinogen-III (O2 route): step 1/1.</text>
</comment>
<comment type="subunit">
    <text evidence="1">Homodimer.</text>
</comment>
<comment type="subcellular location">
    <subcellularLocation>
        <location evidence="1">Cytoplasm</location>
    </subcellularLocation>
</comment>
<comment type="similarity">
    <text evidence="1">Belongs to the aerobic coproporphyrinogen-III oxidase family.</text>
</comment>
<dbReference type="EC" id="1.3.3.3" evidence="1"/>
<dbReference type="EMBL" id="AM039952">
    <property type="protein sequence ID" value="CAJ25929.1"/>
    <property type="molecule type" value="Genomic_DNA"/>
</dbReference>
<dbReference type="RefSeq" id="WP_008571148.1">
    <property type="nucleotide sequence ID" value="NZ_CP017190.1"/>
</dbReference>
<dbReference type="SMR" id="Q3BMT4"/>
<dbReference type="STRING" id="456327.BJD11_24405"/>
<dbReference type="GeneID" id="97512249"/>
<dbReference type="KEGG" id="xcv:XCV4198"/>
<dbReference type="eggNOG" id="COG0408">
    <property type="taxonomic scope" value="Bacteria"/>
</dbReference>
<dbReference type="HOGENOM" id="CLU_026169_0_1_6"/>
<dbReference type="UniPathway" id="UPA00251">
    <property type="reaction ID" value="UER00322"/>
</dbReference>
<dbReference type="Proteomes" id="UP000007069">
    <property type="component" value="Chromosome"/>
</dbReference>
<dbReference type="GO" id="GO:0005737">
    <property type="term" value="C:cytoplasm"/>
    <property type="evidence" value="ECO:0007669"/>
    <property type="project" value="UniProtKB-SubCell"/>
</dbReference>
<dbReference type="GO" id="GO:0004109">
    <property type="term" value="F:coproporphyrinogen oxidase activity"/>
    <property type="evidence" value="ECO:0007669"/>
    <property type="project" value="UniProtKB-UniRule"/>
</dbReference>
<dbReference type="GO" id="GO:0046872">
    <property type="term" value="F:metal ion binding"/>
    <property type="evidence" value="ECO:0007669"/>
    <property type="project" value="UniProtKB-KW"/>
</dbReference>
<dbReference type="GO" id="GO:0042803">
    <property type="term" value="F:protein homodimerization activity"/>
    <property type="evidence" value="ECO:0000250"/>
    <property type="project" value="UniProtKB"/>
</dbReference>
<dbReference type="GO" id="GO:0006782">
    <property type="term" value="P:protoporphyrinogen IX biosynthetic process"/>
    <property type="evidence" value="ECO:0007669"/>
    <property type="project" value="UniProtKB-UniRule"/>
</dbReference>
<dbReference type="FunFam" id="3.40.1500.10:FF:000001">
    <property type="entry name" value="Oxygen-dependent coproporphyrinogen-III oxidase"/>
    <property type="match status" value="1"/>
</dbReference>
<dbReference type="Gene3D" id="3.40.1500.10">
    <property type="entry name" value="Coproporphyrinogen III oxidase, aerobic"/>
    <property type="match status" value="1"/>
</dbReference>
<dbReference type="HAMAP" id="MF_00333">
    <property type="entry name" value="Coprogen_oxidas"/>
    <property type="match status" value="1"/>
</dbReference>
<dbReference type="InterPro" id="IPR001260">
    <property type="entry name" value="Coprogen_oxidase_aer"/>
</dbReference>
<dbReference type="InterPro" id="IPR036406">
    <property type="entry name" value="Coprogen_oxidase_aer_sf"/>
</dbReference>
<dbReference type="InterPro" id="IPR018375">
    <property type="entry name" value="Coprogen_oxidase_CS"/>
</dbReference>
<dbReference type="NCBIfam" id="NF003727">
    <property type="entry name" value="PRK05330.1"/>
    <property type="match status" value="1"/>
</dbReference>
<dbReference type="PANTHER" id="PTHR10755">
    <property type="entry name" value="COPROPORPHYRINOGEN III OXIDASE, MITOCHONDRIAL"/>
    <property type="match status" value="1"/>
</dbReference>
<dbReference type="PANTHER" id="PTHR10755:SF0">
    <property type="entry name" value="OXYGEN-DEPENDENT COPROPORPHYRINOGEN-III OXIDASE, MITOCHONDRIAL"/>
    <property type="match status" value="1"/>
</dbReference>
<dbReference type="Pfam" id="PF01218">
    <property type="entry name" value="Coprogen_oxidas"/>
    <property type="match status" value="1"/>
</dbReference>
<dbReference type="PIRSF" id="PIRSF000166">
    <property type="entry name" value="Coproporphyri_ox"/>
    <property type="match status" value="1"/>
</dbReference>
<dbReference type="PRINTS" id="PR00073">
    <property type="entry name" value="COPRGNOXDASE"/>
</dbReference>
<dbReference type="SUPFAM" id="SSF102886">
    <property type="entry name" value="Coproporphyrinogen III oxidase"/>
    <property type="match status" value="1"/>
</dbReference>
<dbReference type="PROSITE" id="PS01021">
    <property type="entry name" value="COPROGEN_OXIDASE"/>
    <property type="match status" value="1"/>
</dbReference>
<protein>
    <recommendedName>
        <fullName evidence="1">Oxygen-dependent coproporphyrinogen-III oxidase</fullName>
        <shortName evidence="1">CPO</shortName>
        <shortName evidence="1">Coprogen oxidase</shortName>
        <shortName evidence="1">Coproporphyrinogenase</shortName>
        <ecNumber evidence="1">1.3.3.3</ecNumber>
    </recommendedName>
</protein>
<feature type="chain" id="PRO_1000019512" description="Oxygen-dependent coproporphyrinogen-III oxidase">
    <location>
        <begin position="1"/>
        <end position="299"/>
    </location>
</feature>
<feature type="region of interest" description="Important for dimerization" evidence="1">
    <location>
        <begin position="239"/>
        <end position="274"/>
    </location>
</feature>
<feature type="active site" description="Proton donor" evidence="1">
    <location>
        <position position="106"/>
    </location>
</feature>
<feature type="binding site" evidence="1">
    <location>
        <position position="92"/>
    </location>
    <ligand>
        <name>substrate</name>
    </ligand>
</feature>
<feature type="binding site" evidence="1">
    <location>
        <position position="96"/>
    </location>
    <ligand>
        <name>a divalent metal cation</name>
        <dbReference type="ChEBI" id="CHEBI:60240"/>
    </ligand>
</feature>
<feature type="binding site" evidence="1">
    <location>
        <position position="106"/>
    </location>
    <ligand>
        <name>a divalent metal cation</name>
        <dbReference type="ChEBI" id="CHEBI:60240"/>
    </ligand>
</feature>
<feature type="binding site" evidence="1">
    <location>
        <begin position="108"/>
        <end position="110"/>
    </location>
    <ligand>
        <name>substrate</name>
    </ligand>
</feature>
<feature type="binding site" evidence="1">
    <location>
        <position position="145"/>
    </location>
    <ligand>
        <name>a divalent metal cation</name>
        <dbReference type="ChEBI" id="CHEBI:60240"/>
    </ligand>
</feature>
<feature type="binding site" evidence="1">
    <location>
        <position position="175"/>
    </location>
    <ligand>
        <name>a divalent metal cation</name>
        <dbReference type="ChEBI" id="CHEBI:60240"/>
    </ligand>
</feature>
<feature type="binding site" evidence="1">
    <location>
        <begin position="257"/>
        <end position="259"/>
    </location>
    <ligand>
        <name>substrate</name>
    </ligand>
</feature>
<feature type="site" description="Important for dimerization" evidence="1">
    <location>
        <position position="175"/>
    </location>
</feature>
<gene>
    <name evidence="1" type="primary">hemF</name>
    <name type="ordered locus">XCV4198</name>
</gene>